<name>TRHO_PSEP1</name>
<dbReference type="EC" id="1.14.-.-" evidence="1"/>
<dbReference type="EMBL" id="CP000712">
    <property type="protein sequence ID" value="ABQ80080.1"/>
    <property type="molecule type" value="Genomic_DNA"/>
</dbReference>
<dbReference type="SMR" id="A5W7H0"/>
<dbReference type="KEGG" id="ppf:Pput_3956"/>
<dbReference type="eggNOG" id="COG1054">
    <property type="taxonomic scope" value="Bacteria"/>
</dbReference>
<dbReference type="HOGENOM" id="CLU_038878_0_0_6"/>
<dbReference type="GO" id="GO:0016705">
    <property type="term" value="F:oxidoreductase activity, acting on paired donors, with incorporation or reduction of molecular oxygen"/>
    <property type="evidence" value="ECO:0007669"/>
    <property type="project" value="UniProtKB-UniRule"/>
</dbReference>
<dbReference type="GO" id="GO:0006400">
    <property type="term" value="P:tRNA modification"/>
    <property type="evidence" value="ECO:0007669"/>
    <property type="project" value="UniProtKB-UniRule"/>
</dbReference>
<dbReference type="CDD" id="cd01518">
    <property type="entry name" value="RHOD_YceA"/>
    <property type="match status" value="1"/>
</dbReference>
<dbReference type="Gene3D" id="3.30.70.100">
    <property type="match status" value="1"/>
</dbReference>
<dbReference type="Gene3D" id="3.40.250.10">
    <property type="entry name" value="Rhodanese-like domain"/>
    <property type="match status" value="1"/>
</dbReference>
<dbReference type="HAMAP" id="MF_00469">
    <property type="entry name" value="TrhO"/>
    <property type="match status" value="1"/>
</dbReference>
<dbReference type="InterPro" id="IPR001763">
    <property type="entry name" value="Rhodanese-like_dom"/>
</dbReference>
<dbReference type="InterPro" id="IPR036873">
    <property type="entry name" value="Rhodanese-like_dom_sf"/>
</dbReference>
<dbReference type="InterPro" id="IPR020936">
    <property type="entry name" value="TrhO"/>
</dbReference>
<dbReference type="InterPro" id="IPR040503">
    <property type="entry name" value="TRHO_N"/>
</dbReference>
<dbReference type="NCBIfam" id="NF001136">
    <property type="entry name" value="PRK00142.1-4"/>
    <property type="match status" value="1"/>
</dbReference>
<dbReference type="PANTHER" id="PTHR43268:SF3">
    <property type="entry name" value="RHODANESE-LIKE DOMAIN-CONTAINING PROTEIN 7-RELATED"/>
    <property type="match status" value="1"/>
</dbReference>
<dbReference type="PANTHER" id="PTHR43268">
    <property type="entry name" value="THIOSULFATE SULFURTRANSFERASE/RHODANESE-LIKE DOMAIN-CONTAINING PROTEIN 2"/>
    <property type="match status" value="1"/>
</dbReference>
<dbReference type="Pfam" id="PF00581">
    <property type="entry name" value="Rhodanese"/>
    <property type="match status" value="1"/>
</dbReference>
<dbReference type="Pfam" id="PF17773">
    <property type="entry name" value="UPF0176_N"/>
    <property type="match status" value="1"/>
</dbReference>
<dbReference type="SMART" id="SM00450">
    <property type="entry name" value="RHOD"/>
    <property type="match status" value="1"/>
</dbReference>
<dbReference type="SUPFAM" id="SSF52821">
    <property type="entry name" value="Rhodanese/Cell cycle control phosphatase"/>
    <property type="match status" value="1"/>
</dbReference>
<dbReference type="PROSITE" id="PS50206">
    <property type="entry name" value="RHODANESE_3"/>
    <property type="match status" value="1"/>
</dbReference>
<accession>A5W7H0</accession>
<feature type="chain" id="PRO_1000060372" description="tRNA uridine(34) hydroxylase">
    <location>
        <begin position="1"/>
        <end position="310"/>
    </location>
</feature>
<feature type="domain" description="Rhodanese" evidence="1">
    <location>
        <begin position="124"/>
        <end position="218"/>
    </location>
</feature>
<feature type="active site" description="Cysteine persulfide intermediate" evidence="1">
    <location>
        <position position="178"/>
    </location>
</feature>
<protein>
    <recommendedName>
        <fullName evidence="1">tRNA uridine(34) hydroxylase</fullName>
        <ecNumber evidence="1">1.14.-.-</ecNumber>
    </recommendedName>
    <alternativeName>
        <fullName evidence="1">tRNA hydroxylation protein O</fullName>
    </alternativeName>
</protein>
<sequence length="310" mass="35137">MSQAIVVAALYKFVTLEDYVELREPLLKTMLDNNVKGTLLLAHEGINGTVSGTREGIDGLLAWLRNDPRLVDVDHKESYCDEQPFYRTKVKLKKEIVTLGVPGVDPNQAVGTYVEPKDWNALISDPEVLLIDTRNDYEVAIGTFKGAIDPKTETFREFPEYIKANFDPSKHKKVAMFCTGGIRCEKASSYMLGEGFESVYHLKGGILKYFEEVPQEESLWDGDCFVFDNRVTVRHDLSEGEYDQCHACRHPINAEERASEHYSPGVSCPHCWDSLSEKTRRSAIDRQKQIELAKARNLPHPIGYNYKAEA</sequence>
<proteinExistence type="inferred from homology"/>
<comment type="function">
    <text evidence="1">Catalyzes oxygen-dependent 5-hydroxyuridine (ho5U) modification at position 34 in tRNAs.</text>
</comment>
<comment type="catalytic activity">
    <reaction evidence="1">
        <text>uridine(34) in tRNA + AH2 + O2 = 5-hydroxyuridine(34) in tRNA + A + H2O</text>
        <dbReference type="Rhea" id="RHEA:64224"/>
        <dbReference type="Rhea" id="RHEA-COMP:11727"/>
        <dbReference type="Rhea" id="RHEA-COMP:13381"/>
        <dbReference type="ChEBI" id="CHEBI:13193"/>
        <dbReference type="ChEBI" id="CHEBI:15377"/>
        <dbReference type="ChEBI" id="CHEBI:15379"/>
        <dbReference type="ChEBI" id="CHEBI:17499"/>
        <dbReference type="ChEBI" id="CHEBI:65315"/>
        <dbReference type="ChEBI" id="CHEBI:136877"/>
    </reaction>
</comment>
<comment type="similarity">
    <text evidence="1">Belongs to the TrhO family.</text>
</comment>
<reference key="1">
    <citation type="submission" date="2007-05" db="EMBL/GenBank/DDBJ databases">
        <title>Complete sequence of Pseudomonas putida F1.</title>
        <authorList>
            <consortium name="US DOE Joint Genome Institute"/>
            <person name="Copeland A."/>
            <person name="Lucas S."/>
            <person name="Lapidus A."/>
            <person name="Barry K."/>
            <person name="Detter J.C."/>
            <person name="Glavina del Rio T."/>
            <person name="Hammon N."/>
            <person name="Israni S."/>
            <person name="Dalin E."/>
            <person name="Tice H."/>
            <person name="Pitluck S."/>
            <person name="Chain P."/>
            <person name="Malfatti S."/>
            <person name="Shin M."/>
            <person name="Vergez L."/>
            <person name="Schmutz J."/>
            <person name="Larimer F."/>
            <person name="Land M."/>
            <person name="Hauser L."/>
            <person name="Kyrpides N."/>
            <person name="Lykidis A."/>
            <person name="Parales R."/>
            <person name="Richardson P."/>
        </authorList>
    </citation>
    <scope>NUCLEOTIDE SEQUENCE [LARGE SCALE GENOMIC DNA]</scope>
    <source>
        <strain>ATCC 700007 / DSM 6899 / JCM 31910 / BCRC 17059 / LMG 24140 / F1</strain>
    </source>
</reference>
<keyword id="KW-0560">Oxidoreductase</keyword>
<keyword id="KW-0819">tRNA processing</keyword>
<gene>
    <name evidence="1" type="primary">trhO</name>
    <name type="ordered locus">Pput_3956</name>
</gene>
<evidence type="ECO:0000255" key="1">
    <source>
        <dbReference type="HAMAP-Rule" id="MF_00469"/>
    </source>
</evidence>
<organism>
    <name type="scientific">Pseudomonas putida (strain ATCC 700007 / DSM 6899 / JCM 31910 / BCRC 17059 / LMG 24140 / F1)</name>
    <dbReference type="NCBI Taxonomy" id="351746"/>
    <lineage>
        <taxon>Bacteria</taxon>
        <taxon>Pseudomonadati</taxon>
        <taxon>Pseudomonadota</taxon>
        <taxon>Gammaproteobacteria</taxon>
        <taxon>Pseudomonadales</taxon>
        <taxon>Pseudomonadaceae</taxon>
        <taxon>Pseudomonas</taxon>
    </lineage>
</organism>